<organism>
    <name type="scientific">Homo sapiens</name>
    <name type="common">Human</name>
    <dbReference type="NCBI Taxonomy" id="9606"/>
    <lineage>
        <taxon>Eukaryota</taxon>
        <taxon>Metazoa</taxon>
        <taxon>Chordata</taxon>
        <taxon>Craniata</taxon>
        <taxon>Vertebrata</taxon>
        <taxon>Euteleostomi</taxon>
        <taxon>Mammalia</taxon>
        <taxon>Eutheria</taxon>
        <taxon>Euarchontoglires</taxon>
        <taxon>Primates</taxon>
        <taxon>Haplorrhini</taxon>
        <taxon>Catarrhini</taxon>
        <taxon>Hominidae</taxon>
        <taxon>Homo</taxon>
    </lineage>
</organism>
<sequence>MAGAAMAERGRVPPPAPAPSTEGLPRAFLQSLRTLFDILDDRRRGCVHLREIESRWQGTDARELPRGVLEGLRQVAPASGYLTFERFVAGLRTSLLSADGGPRDPTRAPARPGDQPPPPPQRLVFAPADEPRTVLERKPLPLGVRAPLAGPSAAARSPEQLCAPAEAAPCPAEPERSQSAALEPSSSADAGAVACRALEADSGDARRAPRARGERRRHTIASGVDCGLLKQMKELEQEKEVLLQGLEMMARGRDWYQQQLQRVQERQRRLGQSRASADFGAAGSPRPLGRLLPKVQEVARCLGELLAAACASRALPPSSSGPPCPALTSTSPPVWQQQTILMLKEQNRLLTQEVTEKSERITQLEQEKSALIKQLFEARALSQQDGGPLDSTFI</sequence>
<accession>Q86UD0</accession>
<keyword id="KW-0131">Cell cycle</keyword>
<keyword id="KW-0132">Cell division</keyword>
<keyword id="KW-0965">Cell junction</keyword>
<keyword id="KW-1003">Cell membrane</keyword>
<keyword id="KW-0175">Coiled coil</keyword>
<keyword id="KW-0963">Cytoplasm</keyword>
<keyword id="KW-0472">Membrane</keyword>
<keyword id="KW-0498">Mitosis</keyword>
<keyword id="KW-0539">Nucleus</keyword>
<keyword id="KW-0597">Phosphoprotein</keyword>
<keyword id="KW-1267">Proteomics identification</keyword>
<keyword id="KW-1185">Reference proteome</keyword>
<keyword id="KW-0796">Tight junction</keyword>
<feature type="chain" id="PRO_0000286596" description="Suppressor APC domain-containing protein 2">
    <location>
        <begin position="1"/>
        <end position="394"/>
    </location>
</feature>
<feature type="region of interest" description="Disordered" evidence="3">
    <location>
        <begin position="1"/>
        <end position="23"/>
    </location>
</feature>
<feature type="region of interest" description="Disordered" evidence="3">
    <location>
        <begin position="95"/>
        <end position="125"/>
    </location>
</feature>
<feature type="region of interest" description="Disordered" evidence="3">
    <location>
        <begin position="150"/>
        <end position="188"/>
    </location>
</feature>
<feature type="coiled-coil region" evidence="2">
    <location>
        <begin position="227"/>
        <end position="277"/>
    </location>
</feature>
<feature type="coiled-coil region" evidence="2">
    <location>
        <begin position="336"/>
        <end position="384"/>
    </location>
</feature>
<feature type="compositionally biased region" description="Polar residues" evidence="3">
    <location>
        <begin position="177"/>
        <end position="188"/>
    </location>
</feature>
<feature type="modified residue" description="Phosphothreonine" evidence="11">
    <location>
        <position position="219"/>
    </location>
</feature>
<feature type="modified residue" description="Phosphoserine" evidence="11">
    <location>
        <position position="284"/>
    </location>
</feature>
<protein>
    <recommendedName>
        <fullName evidence="9">Suppressor APC domain-containing protein 2</fullName>
    </recommendedName>
    <alternativeName>
        <fullName>Tumor specificity and mitosis phase-dependent expression protein</fullName>
        <shortName>TS/MDEP</shortName>
    </alternativeName>
    <alternativeName>
        <fullName evidence="8">p42.3</fullName>
    </alternativeName>
</protein>
<evidence type="ECO:0000250" key="1">
    <source>
        <dbReference type="UniProtKB" id="Q9D818"/>
    </source>
</evidence>
<evidence type="ECO:0000255" key="2"/>
<evidence type="ECO:0000256" key="3">
    <source>
        <dbReference type="SAM" id="MobiDB-lite"/>
    </source>
</evidence>
<evidence type="ECO:0000269" key="4">
    <source>
    </source>
</evidence>
<evidence type="ECO:0000269" key="5">
    <source>
    </source>
</evidence>
<evidence type="ECO:0000269" key="6">
    <source>
    </source>
</evidence>
<evidence type="ECO:0000269" key="7">
    <source>
    </source>
</evidence>
<evidence type="ECO:0000303" key="8">
    <source>
    </source>
</evidence>
<evidence type="ECO:0000305" key="9"/>
<evidence type="ECO:0000312" key="10">
    <source>
        <dbReference type="HGNC" id="HGNC:28055"/>
    </source>
</evidence>
<evidence type="ECO:0007744" key="11">
    <source>
    </source>
</evidence>
<name>SAPC2_HUMAN</name>
<dbReference type="EMBL" id="DQ150361">
    <property type="protein sequence ID" value="AAZ39408.1"/>
    <property type="status" value="ALT_INIT"/>
    <property type="molecule type" value="mRNA"/>
</dbReference>
<dbReference type="EMBL" id="AL807752">
    <property type="status" value="NOT_ANNOTATED_CDS"/>
    <property type="molecule type" value="Genomic_DNA"/>
</dbReference>
<dbReference type="EMBL" id="BC048267">
    <property type="protein sequence ID" value="AAH48267.1"/>
    <property type="status" value="ALT_INIT"/>
    <property type="molecule type" value="mRNA"/>
</dbReference>
<dbReference type="CCDS" id="CCDS7027.2"/>
<dbReference type="RefSeq" id="NP_848543.2">
    <property type="nucleotide sequence ID" value="NM_178448.4"/>
</dbReference>
<dbReference type="SMR" id="Q86UD0"/>
<dbReference type="BioGRID" id="124649">
    <property type="interactions" value="40"/>
</dbReference>
<dbReference type="CORUM" id="Q86UD0"/>
<dbReference type="FunCoup" id="Q86UD0">
    <property type="interactions" value="389"/>
</dbReference>
<dbReference type="IntAct" id="Q86UD0">
    <property type="interactions" value="34"/>
</dbReference>
<dbReference type="MINT" id="Q86UD0"/>
<dbReference type="STRING" id="9606.ENSP00000386348"/>
<dbReference type="iPTMnet" id="Q86UD0"/>
<dbReference type="PhosphoSitePlus" id="Q86UD0"/>
<dbReference type="BioMuta" id="SAPCD2"/>
<dbReference type="DMDM" id="147638520"/>
<dbReference type="jPOST" id="Q86UD0"/>
<dbReference type="MassIVE" id="Q86UD0"/>
<dbReference type="PaxDb" id="9606-ENSP00000386348"/>
<dbReference type="PeptideAtlas" id="Q86UD0"/>
<dbReference type="ProteomicsDB" id="69799"/>
<dbReference type="Pumba" id="Q86UD0"/>
<dbReference type="Antibodypedia" id="52195">
    <property type="antibodies" value="51 antibodies from 13 providers"/>
</dbReference>
<dbReference type="DNASU" id="89958"/>
<dbReference type="Ensembl" id="ENST00000409687.5">
    <property type="protein sequence ID" value="ENSP00000386348.3"/>
    <property type="gene ID" value="ENSG00000186193.9"/>
</dbReference>
<dbReference type="GeneID" id="89958"/>
<dbReference type="KEGG" id="hsa:89958"/>
<dbReference type="MANE-Select" id="ENST00000409687.5">
    <property type="protein sequence ID" value="ENSP00000386348.3"/>
    <property type="RefSeq nucleotide sequence ID" value="NM_178448.4"/>
    <property type="RefSeq protein sequence ID" value="NP_848543.2"/>
</dbReference>
<dbReference type="UCSC" id="uc011men.3">
    <property type="organism name" value="human"/>
</dbReference>
<dbReference type="AGR" id="HGNC:28055"/>
<dbReference type="CTD" id="89958"/>
<dbReference type="DisGeNET" id="89958"/>
<dbReference type="GeneCards" id="SAPCD2"/>
<dbReference type="HGNC" id="HGNC:28055">
    <property type="gene designation" value="SAPCD2"/>
</dbReference>
<dbReference type="HPA" id="ENSG00000186193">
    <property type="expression patterns" value="Tissue enhanced (brain, esophagus)"/>
</dbReference>
<dbReference type="MIM" id="612057">
    <property type="type" value="gene"/>
</dbReference>
<dbReference type="neXtProt" id="NX_Q86UD0"/>
<dbReference type="OpenTargets" id="ENSG00000186193"/>
<dbReference type="PharmGKB" id="PA134959870"/>
<dbReference type="VEuPathDB" id="HostDB:ENSG00000186193"/>
<dbReference type="eggNOG" id="ENOG502QUJT">
    <property type="taxonomic scope" value="Eukaryota"/>
</dbReference>
<dbReference type="GeneTree" id="ENSGT00390000008072"/>
<dbReference type="HOGENOM" id="CLU_024930_0_0_1"/>
<dbReference type="InParanoid" id="Q86UD0"/>
<dbReference type="OMA" id="WQLNLMA"/>
<dbReference type="OrthoDB" id="10035013at2759"/>
<dbReference type="PAN-GO" id="Q86UD0">
    <property type="GO annotations" value="0 GO annotations based on evolutionary models"/>
</dbReference>
<dbReference type="PhylomeDB" id="Q86UD0"/>
<dbReference type="TreeFam" id="TF324086"/>
<dbReference type="PathwayCommons" id="Q86UD0"/>
<dbReference type="SignaLink" id="Q86UD0"/>
<dbReference type="BioGRID-ORCS" id="89958">
    <property type="hits" value="19 hits in 1144 CRISPR screens"/>
</dbReference>
<dbReference type="ChiTaRS" id="SAPCD2">
    <property type="organism name" value="human"/>
</dbReference>
<dbReference type="GenomeRNAi" id="89958"/>
<dbReference type="Pharos" id="Q86UD0">
    <property type="development level" value="Tbio"/>
</dbReference>
<dbReference type="PRO" id="PR:Q86UD0"/>
<dbReference type="Proteomes" id="UP000005640">
    <property type="component" value="Chromosome 9"/>
</dbReference>
<dbReference type="RNAct" id="Q86UD0">
    <property type="molecule type" value="protein"/>
</dbReference>
<dbReference type="Bgee" id="ENSG00000186193">
    <property type="expression patterns" value="Expressed in buccal mucosa cell and 152 other cell types or tissues"/>
</dbReference>
<dbReference type="GO" id="GO:0045179">
    <property type="term" value="C:apical cortex"/>
    <property type="evidence" value="ECO:0000314"/>
    <property type="project" value="UniProtKB"/>
</dbReference>
<dbReference type="GO" id="GO:0043296">
    <property type="term" value="C:apical junction complex"/>
    <property type="evidence" value="ECO:0000314"/>
    <property type="project" value="UniProtKB"/>
</dbReference>
<dbReference type="GO" id="GO:0016324">
    <property type="term" value="C:apical plasma membrane"/>
    <property type="evidence" value="ECO:0007669"/>
    <property type="project" value="UniProtKB-SubCell"/>
</dbReference>
<dbReference type="GO" id="GO:0005923">
    <property type="term" value="C:bicellular tight junction"/>
    <property type="evidence" value="ECO:0007669"/>
    <property type="project" value="UniProtKB-SubCell"/>
</dbReference>
<dbReference type="GO" id="GO:0005829">
    <property type="term" value="C:cytosol"/>
    <property type="evidence" value="ECO:0000314"/>
    <property type="project" value="HPA"/>
</dbReference>
<dbReference type="GO" id="GO:0005730">
    <property type="term" value="C:nucleolus"/>
    <property type="evidence" value="ECO:0000314"/>
    <property type="project" value="HPA"/>
</dbReference>
<dbReference type="GO" id="GO:0005654">
    <property type="term" value="C:nucleoplasm"/>
    <property type="evidence" value="ECO:0000314"/>
    <property type="project" value="HPA"/>
</dbReference>
<dbReference type="GO" id="GO:0000132">
    <property type="term" value="P:establishment of mitotic spindle orientation"/>
    <property type="evidence" value="ECO:0000250"/>
    <property type="project" value="UniProtKB"/>
</dbReference>
<dbReference type="GO" id="GO:1904777">
    <property type="term" value="P:negative regulation of protein localization to cell cortex"/>
    <property type="evidence" value="ECO:0000315"/>
    <property type="project" value="UniProtKB"/>
</dbReference>
<dbReference type="GO" id="GO:0008284">
    <property type="term" value="P:positive regulation of cell population proliferation"/>
    <property type="evidence" value="ECO:0000315"/>
    <property type="project" value="UniProtKB"/>
</dbReference>
<dbReference type="GO" id="GO:0090175">
    <property type="term" value="P:regulation of establishment of planar polarity"/>
    <property type="evidence" value="ECO:0000250"/>
    <property type="project" value="UniProtKB"/>
</dbReference>
<dbReference type="GO" id="GO:0098725">
    <property type="term" value="P:symmetric cell division"/>
    <property type="evidence" value="ECO:0000250"/>
    <property type="project" value="UniProtKB"/>
</dbReference>
<dbReference type="InterPro" id="IPR026828">
    <property type="entry name" value="Suppressor_APCD_1/2"/>
</dbReference>
<dbReference type="PANTHER" id="PTHR14907">
    <property type="entry name" value="FI14130P"/>
    <property type="match status" value="1"/>
</dbReference>
<dbReference type="PANTHER" id="PTHR14907:SF3">
    <property type="entry name" value="SUPPRESSOR APC DOMAIN-CONTAINING PROTEIN 2"/>
    <property type="match status" value="1"/>
</dbReference>
<dbReference type="Pfam" id="PF11414">
    <property type="entry name" value="Suppressor_APC"/>
    <property type="match status" value="1"/>
</dbReference>
<gene>
    <name evidence="10" type="primary">SAPCD2</name>
    <name type="synonym">C9orf140</name>
</gene>
<comment type="function">
    <text evidence="1 5 6 7">Plays a role in planar mitotic spindle orientation in retinal progenitor cells (RPCs) and promotes the production of symmetric terminal divisions (By similarity). Negatively regulates the mitotic apical cortex localization of GPSM2 (PubMed:26766442). Involved also in positive regulation of cell proliferation and tumor cell growth (PubMed:23576022, PubMed:23704824).</text>
</comment>
<comment type="subunit">
    <text evidence="7">Interacts with a spindle orientation complex at least composed of GNAI1, GPSM2 and NUMA1 (PubMed:26766442). Interacts with GPSM2 (via TPR motifs); this interaction is required to prevent GPSM2 anchoring at the mitotic apical cortex and is inhibited in presence of NUMA1 in a dose dependent manner (PubMed:26766442). Interacts with PARD3 (PubMed:26766442).</text>
</comment>
<comment type="interaction">
    <interactant intactId="EBI-2561646">
        <id>Q86UD0</id>
    </interactant>
    <interactant intactId="EBI-8643161">
        <id>Q9NX04</id>
        <label>AIRIM</label>
    </interactant>
    <organismsDiffer>false</organismsDiffer>
    <experiments>5</experiments>
</comment>
<comment type="interaction">
    <interactant intactId="EBI-2561646">
        <id>Q86UD0</id>
    </interactant>
    <interactant intactId="EBI-492498">
        <id>P18848</id>
        <label>ATF4</label>
    </interactant>
    <organismsDiffer>false</organismsDiffer>
    <experiments>3</experiments>
</comment>
<comment type="interaction">
    <interactant intactId="EBI-2561646">
        <id>Q86UD0</id>
    </interactant>
    <interactant intactId="EBI-10229433">
        <id>Q13515</id>
        <label>BFSP2</label>
    </interactant>
    <organismsDiffer>false</organismsDiffer>
    <experiments>3</experiments>
</comment>
<comment type="interaction">
    <interactant intactId="EBI-2561646">
        <id>Q86UD0</id>
    </interactant>
    <interactant intactId="EBI-3867333">
        <id>A8MQ03</id>
        <label>CYSRT1</label>
    </interactant>
    <organismsDiffer>false</organismsDiffer>
    <experiments>3</experiments>
</comment>
<comment type="interaction">
    <interactant intactId="EBI-2561646">
        <id>Q86UD0</id>
    </interactant>
    <interactant intactId="EBI-6251402">
        <id>Q9UPT5-1</id>
        <label>EXOC7</label>
    </interactant>
    <organismsDiffer>false</organismsDiffer>
    <experiments>3</experiments>
</comment>
<comment type="interaction">
    <interactant intactId="EBI-2561646">
        <id>Q86UD0</id>
    </interactant>
    <interactant intactId="EBI-371669">
        <id>O75496</id>
        <label>GMNN</label>
    </interactant>
    <organismsDiffer>false</organismsDiffer>
    <experiments>3</experiments>
</comment>
<comment type="interaction">
    <interactant intactId="EBI-2561646">
        <id>Q86UD0</id>
    </interactant>
    <interactant intactId="EBI-473189">
        <id>Q96D09</id>
        <label>GPRASP2</label>
    </interactant>
    <organismsDiffer>false</organismsDiffer>
    <experiments>3</experiments>
</comment>
<comment type="interaction">
    <interactant intactId="EBI-2561646">
        <id>Q86UD0</id>
    </interactant>
    <interactant intactId="EBI-2430095">
        <id>P12035</id>
        <label>KRT3</label>
    </interactant>
    <organismsDiffer>false</organismsDiffer>
    <experiments>3</experiments>
</comment>
<comment type="interaction">
    <interactant intactId="EBI-2561646">
        <id>Q86UD0</id>
    </interactant>
    <interactant intactId="EBI-11749135">
        <id>Q8IUG1</id>
        <label>KRTAP1-3</label>
    </interactant>
    <organismsDiffer>false</organismsDiffer>
    <experiments>3</experiments>
</comment>
<comment type="interaction">
    <interactant intactId="EBI-2561646">
        <id>Q86UD0</id>
    </interactant>
    <interactant intactId="EBI-724076">
        <id>Q99750</id>
        <label>MDFI</label>
    </interactant>
    <organismsDiffer>false</organismsDiffer>
    <experiments>3</experiments>
</comment>
<comment type="interaction">
    <interactant intactId="EBI-2561646">
        <id>Q86UD0</id>
    </interactant>
    <interactant intactId="EBI-749285">
        <id>Q15311</id>
        <label>RALBP1</label>
    </interactant>
    <organismsDiffer>false</organismsDiffer>
    <experiments>8</experiments>
</comment>
<comment type="interaction">
    <interactant intactId="EBI-2561646">
        <id>Q86UD0</id>
    </interactant>
    <interactant intactId="EBI-739895">
        <id>Q8N6Y0</id>
        <label>USHBP1</label>
    </interactant>
    <organismsDiffer>false</organismsDiffer>
    <experiments>3</experiments>
</comment>
<comment type="interaction">
    <interactant intactId="EBI-2561646">
        <id>Q86UD0</id>
    </interactant>
    <interactant intactId="EBI-11027067">
        <id>P18206-2</id>
        <label>VCL</label>
    </interactant>
    <organismsDiffer>false</organismsDiffer>
    <experiments>3</experiments>
</comment>
<comment type="subcellular location">
    <subcellularLocation>
        <location evidence="4">Cytoplasm</location>
    </subcellularLocation>
    <subcellularLocation>
        <location evidence="4">Nucleus</location>
    </subcellularLocation>
    <subcellularLocation>
        <location evidence="7">Cytoplasm</location>
        <location evidence="7">Cell cortex</location>
    </subcellularLocation>
    <subcellularLocation>
        <location evidence="1">Apical cell membrane</location>
    </subcellularLocation>
    <subcellularLocation>
        <location evidence="7">Cell junction</location>
        <location evidence="7">Tight junction</location>
    </subcellularLocation>
    <text evidence="1">Localized at the apical cortical region during the M phase. In horizontally retinal progenitor dividing cells, localized at the pole cortical region from prophase to telophase cells. In vertically retinal progenitor dividing cells, not detected at the pole cortical region at any stage of mitosis.</text>
</comment>
<comment type="tissue specificity">
    <text evidence="4 6">Expressed in 5-month-old fetal tissues, including stomach, intestine, colon, liver, brain, lung, heart, spleen and kidney (PubMed:17525738). Undetectable in non-cancerous adult tissues (PubMed:17525738). Expressed in many primary gastric carcinoma, but almost not in adjacent normal mucosa (PubMed:17525738). Expressed preferentially in M and G1 phases, compared to S and G2 phases (PubMed:17525738). Expression is up-regulated in hepatocellular carcinoma (HCC) and colorectal cancer (CRC) tissues (at protein level) (PubMed:23704824).</text>
</comment>
<comment type="sequence caution" evidence="9">
    <conflict type="erroneous initiation">
        <sequence resource="EMBL-CDS" id="AAH48267"/>
    </conflict>
    <text>Truncated N-terminus.</text>
</comment>
<comment type="sequence caution" evidence="9">
    <conflict type="erroneous initiation">
        <sequence resource="EMBL-CDS" id="AAZ39408"/>
    </conflict>
    <text>Truncated N-terminus.</text>
</comment>
<proteinExistence type="evidence at protein level"/>
<reference key="1">
    <citation type="journal article" date="2007" name="Oncogene">
        <title>Identification and characterization of a novel p42.3 gene as tumor-specific and mitosis phase-dependent expression in gastric cancer.</title>
        <authorList>
            <person name="Xu X."/>
            <person name="Li W."/>
            <person name="Fan X."/>
            <person name="Liang Y."/>
            <person name="Zhao M."/>
            <person name="Zhang J."/>
            <person name="Liang Y."/>
            <person name="Tong W."/>
            <person name="Wang J."/>
            <person name="Yang W."/>
            <person name="Lu Y."/>
        </authorList>
    </citation>
    <scope>NUCLEOTIDE SEQUENCE [MRNA]</scope>
    <scope>SUBCELLULAR LOCATION</scope>
    <scope>TISSUE SPECIFICITY</scope>
</reference>
<reference key="2">
    <citation type="journal article" date="2004" name="Nature">
        <title>DNA sequence and analysis of human chromosome 9.</title>
        <authorList>
            <person name="Humphray S.J."/>
            <person name="Oliver K."/>
            <person name="Hunt A.R."/>
            <person name="Plumb R.W."/>
            <person name="Loveland J.E."/>
            <person name="Howe K.L."/>
            <person name="Andrews T.D."/>
            <person name="Searle S."/>
            <person name="Hunt S.E."/>
            <person name="Scott C.E."/>
            <person name="Jones M.C."/>
            <person name="Ainscough R."/>
            <person name="Almeida J.P."/>
            <person name="Ambrose K.D."/>
            <person name="Ashwell R.I.S."/>
            <person name="Babbage A.K."/>
            <person name="Babbage S."/>
            <person name="Bagguley C.L."/>
            <person name="Bailey J."/>
            <person name="Banerjee R."/>
            <person name="Barker D.J."/>
            <person name="Barlow K.F."/>
            <person name="Bates K."/>
            <person name="Beasley H."/>
            <person name="Beasley O."/>
            <person name="Bird C.P."/>
            <person name="Bray-Allen S."/>
            <person name="Brown A.J."/>
            <person name="Brown J.Y."/>
            <person name="Burford D."/>
            <person name="Burrill W."/>
            <person name="Burton J."/>
            <person name="Carder C."/>
            <person name="Carter N.P."/>
            <person name="Chapman J.C."/>
            <person name="Chen Y."/>
            <person name="Clarke G."/>
            <person name="Clark S.Y."/>
            <person name="Clee C.M."/>
            <person name="Clegg S."/>
            <person name="Collier R.E."/>
            <person name="Corby N."/>
            <person name="Crosier M."/>
            <person name="Cummings A.T."/>
            <person name="Davies J."/>
            <person name="Dhami P."/>
            <person name="Dunn M."/>
            <person name="Dutta I."/>
            <person name="Dyer L.W."/>
            <person name="Earthrowl M.E."/>
            <person name="Faulkner L."/>
            <person name="Fleming C.J."/>
            <person name="Frankish A."/>
            <person name="Frankland J.A."/>
            <person name="French L."/>
            <person name="Fricker D.G."/>
            <person name="Garner P."/>
            <person name="Garnett J."/>
            <person name="Ghori J."/>
            <person name="Gilbert J.G.R."/>
            <person name="Glison C."/>
            <person name="Grafham D.V."/>
            <person name="Gribble S."/>
            <person name="Griffiths C."/>
            <person name="Griffiths-Jones S."/>
            <person name="Grocock R."/>
            <person name="Guy J."/>
            <person name="Hall R.E."/>
            <person name="Hammond S."/>
            <person name="Harley J.L."/>
            <person name="Harrison E.S.I."/>
            <person name="Hart E.A."/>
            <person name="Heath P.D."/>
            <person name="Henderson C.D."/>
            <person name="Hopkins B.L."/>
            <person name="Howard P.J."/>
            <person name="Howden P.J."/>
            <person name="Huckle E."/>
            <person name="Johnson C."/>
            <person name="Johnson D."/>
            <person name="Joy A.A."/>
            <person name="Kay M."/>
            <person name="Keenan S."/>
            <person name="Kershaw J.K."/>
            <person name="Kimberley A.M."/>
            <person name="King A."/>
            <person name="Knights A."/>
            <person name="Laird G.K."/>
            <person name="Langford C."/>
            <person name="Lawlor S."/>
            <person name="Leongamornlert D.A."/>
            <person name="Leversha M."/>
            <person name="Lloyd C."/>
            <person name="Lloyd D.M."/>
            <person name="Lovell J."/>
            <person name="Martin S."/>
            <person name="Mashreghi-Mohammadi M."/>
            <person name="Matthews L."/>
            <person name="McLaren S."/>
            <person name="McLay K.E."/>
            <person name="McMurray A."/>
            <person name="Milne S."/>
            <person name="Nickerson T."/>
            <person name="Nisbett J."/>
            <person name="Nordsiek G."/>
            <person name="Pearce A.V."/>
            <person name="Peck A.I."/>
            <person name="Porter K.M."/>
            <person name="Pandian R."/>
            <person name="Pelan S."/>
            <person name="Phillimore B."/>
            <person name="Povey S."/>
            <person name="Ramsey Y."/>
            <person name="Rand V."/>
            <person name="Scharfe M."/>
            <person name="Sehra H.K."/>
            <person name="Shownkeen R."/>
            <person name="Sims S.K."/>
            <person name="Skuce C.D."/>
            <person name="Smith M."/>
            <person name="Steward C.A."/>
            <person name="Swarbreck D."/>
            <person name="Sycamore N."/>
            <person name="Tester J."/>
            <person name="Thorpe A."/>
            <person name="Tracey A."/>
            <person name="Tromans A."/>
            <person name="Thomas D.W."/>
            <person name="Wall M."/>
            <person name="Wallis J.M."/>
            <person name="West A.P."/>
            <person name="Whitehead S.L."/>
            <person name="Willey D.L."/>
            <person name="Williams S.A."/>
            <person name="Wilming L."/>
            <person name="Wray P.W."/>
            <person name="Young L."/>
            <person name="Ashurst J.L."/>
            <person name="Coulson A."/>
            <person name="Blocker H."/>
            <person name="Durbin R.M."/>
            <person name="Sulston J.E."/>
            <person name="Hubbard T."/>
            <person name="Jackson M.J."/>
            <person name="Bentley D.R."/>
            <person name="Beck S."/>
            <person name="Rogers J."/>
            <person name="Dunham I."/>
        </authorList>
    </citation>
    <scope>NUCLEOTIDE SEQUENCE [LARGE SCALE GENOMIC DNA]</scope>
</reference>
<reference key="3">
    <citation type="journal article" date="2004" name="Genome Res.">
        <title>The status, quality, and expansion of the NIH full-length cDNA project: the Mammalian Gene Collection (MGC).</title>
        <authorList>
            <consortium name="The MGC Project Team"/>
        </authorList>
    </citation>
    <scope>NUCLEOTIDE SEQUENCE [LARGE SCALE MRNA]</scope>
    <source>
        <tissue>Lymph</tissue>
    </source>
</reference>
<reference key="4">
    <citation type="journal article" date="2013" name="J. Cancer Res. Clin. Oncol.">
        <title>p42.3: a promising biomarker for the progression and prognosis of human colorectal cancer.</title>
        <authorList>
            <person name="Yuan X.S."/>
            <person name="Zhang Y."/>
            <person name="Guan X.Y."/>
            <person name="Dong B."/>
            <person name="Zhao M."/>
            <person name="Mao L.L."/>
            <person name="Lu Y.Y."/>
            <person name="Tian X.Y."/>
            <person name="Hao C.Y."/>
        </authorList>
    </citation>
    <scope>FUNCTION</scope>
    <scope>TISSUE SPECIFICITY</scope>
</reference>
<reference key="5">
    <citation type="journal article" date="2013" name="J. Proteome Res.">
        <title>Toward a comprehensive characterization of a human cancer cell phosphoproteome.</title>
        <authorList>
            <person name="Zhou H."/>
            <person name="Di Palma S."/>
            <person name="Preisinger C."/>
            <person name="Peng M."/>
            <person name="Polat A.N."/>
            <person name="Heck A.J."/>
            <person name="Mohammed S."/>
        </authorList>
    </citation>
    <scope>PHOSPHORYLATION [LARGE SCALE ANALYSIS] AT THR-219 AND SER-284</scope>
    <scope>IDENTIFICATION BY MASS SPECTROMETRY [LARGE SCALE ANALYSIS]</scope>
    <source>
        <tissue>Cervix carcinoma</tissue>
    </source>
</reference>
<reference key="6">
    <citation type="journal article" date="2013" name="World J. Gastroenterol.">
        <title>Overexpression of p42.3 promotes cell growth and tumorigenicity in hepatocellular carcinoma.</title>
        <authorList>
            <person name="Sun W."/>
            <person name="Dong W.W."/>
            <person name="Mao L.L."/>
            <person name="Li W.M."/>
            <person name="Cui J.T."/>
            <person name="Xing R."/>
            <person name="Lu Y.Y."/>
        </authorList>
    </citation>
    <scope>FUNCTION</scope>
    <scope>TISSUE SPECIFICITY</scope>
</reference>
<reference key="7">
    <citation type="journal article" date="2016" name="Dev. Cell">
        <title>SAPCD2 controls spindle orientation and asymmetric divisions by negatively regulating the Galphai-LGN-NuMA ternary complex.</title>
        <authorList>
            <person name="Chiu C.W."/>
            <person name="Monat C."/>
            <person name="Robitaille M."/>
            <person name="Lacomme M."/>
            <person name="Daulat A.M."/>
            <person name="Macleod G."/>
            <person name="McNeill H."/>
            <person name="Cayouette M."/>
            <person name="Angers S."/>
        </authorList>
    </citation>
    <scope>FUNCTION</scope>
    <scope>INTERACTION WITH GPSM2 AND PARD3</scope>
    <scope>IDENTIFICATION IN A SPINDLE ORIENTATION COMPLEX</scope>
    <scope>SUBCELLULAR LOCATION</scope>
    <scope>IDENTIFICATION BY MASS SPECTROMETRY</scope>
</reference>